<evidence type="ECO:0000255" key="1">
    <source>
        <dbReference type="HAMAP-Rule" id="MF_00462"/>
    </source>
</evidence>
<organism>
    <name type="scientific">Yersinia enterocolitica serotype O:8 / biotype 1B (strain NCTC 13174 / 8081)</name>
    <dbReference type="NCBI Taxonomy" id="393305"/>
    <lineage>
        <taxon>Bacteria</taxon>
        <taxon>Pseudomonadati</taxon>
        <taxon>Pseudomonadota</taxon>
        <taxon>Gammaproteobacteria</taxon>
        <taxon>Enterobacterales</taxon>
        <taxon>Yersiniaceae</taxon>
        <taxon>Yersinia</taxon>
    </lineage>
</organism>
<accession>A1JM66</accession>
<proteinExistence type="inferred from homology"/>
<name>RNFD_YERE8</name>
<reference key="1">
    <citation type="journal article" date="2006" name="PLoS Genet.">
        <title>The complete genome sequence and comparative genome analysis of the high pathogenicity Yersinia enterocolitica strain 8081.</title>
        <authorList>
            <person name="Thomson N.R."/>
            <person name="Howard S."/>
            <person name="Wren B.W."/>
            <person name="Holden M.T.G."/>
            <person name="Crossman L."/>
            <person name="Challis G.L."/>
            <person name="Churcher C."/>
            <person name="Mungall K."/>
            <person name="Brooks K."/>
            <person name="Chillingworth T."/>
            <person name="Feltwell T."/>
            <person name="Abdellah Z."/>
            <person name="Hauser H."/>
            <person name="Jagels K."/>
            <person name="Maddison M."/>
            <person name="Moule S."/>
            <person name="Sanders M."/>
            <person name="Whitehead S."/>
            <person name="Quail M.A."/>
            <person name="Dougan G."/>
            <person name="Parkhill J."/>
            <person name="Prentice M.B."/>
        </authorList>
    </citation>
    <scope>NUCLEOTIDE SEQUENCE [LARGE SCALE GENOMIC DNA]</scope>
    <source>
        <strain>NCTC 13174 / 8081</strain>
    </source>
</reference>
<comment type="function">
    <text evidence="1">Part of a membrane-bound complex that couples electron transfer with translocation of ions across the membrane.</text>
</comment>
<comment type="cofactor">
    <cofactor evidence="1">
        <name>FMN</name>
        <dbReference type="ChEBI" id="CHEBI:58210"/>
    </cofactor>
</comment>
<comment type="subunit">
    <text evidence="1">The complex is composed of six subunits: RnfA, RnfB, RnfC, RnfD, RnfE and RnfG.</text>
</comment>
<comment type="subcellular location">
    <subcellularLocation>
        <location evidence="1">Cell inner membrane</location>
        <topology evidence="1">Multi-pass membrane protein</topology>
    </subcellularLocation>
</comment>
<comment type="similarity">
    <text evidence="1">Belongs to the NqrB/RnfD family.</text>
</comment>
<feature type="chain" id="PRO_0000298243" description="Ion-translocating oxidoreductase complex subunit D">
    <location>
        <begin position="1"/>
        <end position="351"/>
    </location>
</feature>
<feature type="transmembrane region" description="Helical" evidence="1">
    <location>
        <begin position="18"/>
        <end position="38"/>
    </location>
</feature>
<feature type="transmembrane region" description="Helical" evidence="1">
    <location>
        <begin position="42"/>
        <end position="62"/>
    </location>
</feature>
<feature type="transmembrane region" description="Helical" evidence="1">
    <location>
        <begin position="87"/>
        <end position="107"/>
    </location>
</feature>
<feature type="transmembrane region" description="Helical" evidence="1">
    <location>
        <begin position="121"/>
        <end position="141"/>
    </location>
</feature>
<feature type="transmembrane region" description="Helical" evidence="1">
    <location>
        <begin position="212"/>
        <end position="232"/>
    </location>
</feature>
<feature type="transmembrane region" description="Helical" evidence="1">
    <location>
        <begin position="241"/>
        <end position="261"/>
    </location>
</feature>
<feature type="transmembrane region" description="Helical" evidence="1">
    <location>
        <begin position="264"/>
        <end position="284"/>
    </location>
</feature>
<feature type="transmembrane region" description="Helical" evidence="1">
    <location>
        <begin position="298"/>
        <end position="318"/>
    </location>
</feature>
<feature type="transmembrane region" description="Helical" evidence="1">
    <location>
        <begin position="320"/>
        <end position="340"/>
    </location>
</feature>
<feature type="modified residue" description="FMN phosphoryl threonine" evidence="1">
    <location>
        <position position="185"/>
    </location>
</feature>
<dbReference type="EC" id="7.-.-.-" evidence="1"/>
<dbReference type="EMBL" id="AM286415">
    <property type="protein sequence ID" value="CAL12069.1"/>
    <property type="molecule type" value="Genomic_DNA"/>
</dbReference>
<dbReference type="RefSeq" id="YP_001006243.1">
    <property type="nucleotide sequence ID" value="NC_008800.1"/>
</dbReference>
<dbReference type="SMR" id="A1JM66"/>
<dbReference type="KEGG" id="yen:YE1990"/>
<dbReference type="PATRIC" id="fig|393305.7.peg.2152"/>
<dbReference type="eggNOG" id="COG4658">
    <property type="taxonomic scope" value="Bacteria"/>
</dbReference>
<dbReference type="HOGENOM" id="CLU_042020_0_0_6"/>
<dbReference type="OrthoDB" id="9776359at2"/>
<dbReference type="Proteomes" id="UP000000642">
    <property type="component" value="Chromosome"/>
</dbReference>
<dbReference type="GO" id="GO:0005886">
    <property type="term" value="C:plasma membrane"/>
    <property type="evidence" value="ECO:0007669"/>
    <property type="project" value="UniProtKB-SubCell"/>
</dbReference>
<dbReference type="GO" id="GO:0022900">
    <property type="term" value="P:electron transport chain"/>
    <property type="evidence" value="ECO:0007669"/>
    <property type="project" value="UniProtKB-UniRule"/>
</dbReference>
<dbReference type="GO" id="GO:0055085">
    <property type="term" value="P:transmembrane transport"/>
    <property type="evidence" value="ECO:0007669"/>
    <property type="project" value="InterPro"/>
</dbReference>
<dbReference type="HAMAP" id="MF_00462">
    <property type="entry name" value="RsxD_RnfD"/>
    <property type="match status" value="1"/>
</dbReference>
<dbReference type="InterPro" id="IPR004338">
    <property type="entry name" value="NqrB/RnfD"/>
</dbReference>
<dbReference type="InterPro" id="IPR011303">
    <property type="entry name" value="RnfD_bac"/>
</dbReference>
<dbReference type="NCBIfam" id="NF002011">
    <property type="entry name" value="PRK00816.1"/>
    <property type="match status" value="1"/>
</dbReference>
<dbReference type="NCBIfam" id="TIGR01946">
    <property type="entry name" value="rnfD"/>
    <property type="match status" value="1"/>
</dbReference>
<dbReference type="PANTHER" id="PTHR30578">
    <property type="entry name" value="ELECTRON TRANSPORT COMPLEX PROTEIN RNFD"/>
    <property type="match status" value="1"/>
</dbReference>
<dbReference type="PANTHER" id="PTHR30578:SF0">
    <property type="entry name" value="ION-TRANSLOCATING OXIDOREDUCTASE COMPLEX SUBUNIT D"/>
    <property type="match status" value="1"/>
</dbReference>
<dbReference type="Pfam" id="PF03116">
    <property type="entry name" value="NQR2_RnfD_RnfE"/>
    <property type="match status" value="1"/>
</dbReference>
<gene>
    <name evidence="1" type="primary">rnfD</name>
    <name type="ordered locus">YE1990</name>
</gene>
<sequence>MQIASSPFTHNQRSTRSIMLLVILACIPGIIAQTYFFGYGSLIQVALAIMTAVLAEGAVLHLRKQPVLTRLQDNSALLTGLLLGISLPPLAPWWMIVLGTAFAIIIAKQLYGGLGQNPFNPAMVGYVVLLISFPVQMTSWLPPLPLQGTPVGFYDSLLTIFTGFTQNGADIHQLQIGYDGISQATPLDNFKTSLRSQPVEQILQQPIFTAGLAGIGWQWINLGFLAGGLLLLWRKAIHWHIPVSFLLALAGCAAISWMIAPHSFAPPMLHLFSGATMLGAFFIATDPVSASTTPRGRLIFGALIGILVWLIRVYGGYPDGVAFAVLLANICVPLIDHYTQPRVYGHQRGHK</sequence>
<protein>
    <recommendedName>
        <fullName evidence="1">Ion-translocating oxidoreductase complex subunit D</fullName>
        <ecNumber evidence="1">7.-.-.-</ecNumber>
    </recommendedName>
    <alternativeName>
        <fullName evidence="1">Rnf electron transport complex subunit D</fullName>
    </alternativeName>
</protein>
<keyword id="KW-0997">Cell inner membrane</keyword>
<keyword id="KW-1003">Cell membrane</keyword>
<keyword id="KW-0249">Electron transport</keyword>
<keyword id="KW-0285">Flavoprotein</keyword>
<keyword id="KW-0288">FMN</keyword>
<keyword id="KW-0472">Membrane</keyword>
<keyword id="KW-0597">Phosphoprotein</keyword>
<keyword id="KW-1278">Translocase</keyword>
<keyword id="KW-0812">Transmembrane</keyword>
<keyword id="KW-1133">Transmembrane helix</keyword>
<keyword id="KW-0813">Transport</keyword>